<protein>
    <recommendedName>
        <fullName>Sperm head and tail associated protein</fullName>
    </recommendedName>
</protein>
<proteinExistence type="evidence at protein level"/>
<dbReference type="EMBL" id="FJ882982">
    <property type="protein sequence ID" value="ACQ99317.1"/>
    <property type="molecule type" value="mRNA"/>
</dbReference>
<dbReference type="FunCoup" id="C4P6S0">
    <property type="interactions" value="1"/>
</dbReference>
<dbReference type="SwissPalm" id="C4P6S0"/>
<dbReference type="PaxDb" id="10090-ENSMUSP00000130430"/>
<dbReference type="ProteomicsDB" id="257228">
    <molecule id="C4P6S0-1"/>
</dbReference>
<dbReference type="ProteomicsDB" id="257229">
    <molecule id="C4P6S0-2"/>
</dbReference>
<dbReference type="Antibodypedia" id="32791">
    <property type="antibodies" value="66 antibodies from 20 providers"/>
</dbReference>
<dbReference type="Ensembl" id="ENSMUST00000165493.8">
    <molecule id="C4P6S0-1"/>
    <property type="protein sequence ID" value="ENSMUSP00000130430.2"/>
    <property type="gene ID" value="ENSMUSG00000028706.15"/>
</dbReference>
<dbReference type="AGR" id="MGI:1919431"/>
<dbReference type="MGI" id="MGI:1919431">
    <property type="gene designation" value="Nsun4"/>
</dbReference>
<dbReference type="VEuPathDB" id="HostDB:ENSMUSG00000028706"/>
<dbReference type="eggNOG" id="ENOG502THAH">
    <property type="taxonomic scope" value="Eukaryota"/>
</dbReference>
<dbReference type="GeneTree" id="ENSGT00500000045816"/>
<dbReference type="HOGENOM" id="CLU_018872_0_0_1"/>
<dbReference type="InParanoid" id="C4P6S0"/>
<dbReference type="OMA" id="PPCSTHI"/>
<dbReference type="OrthoDB" id="9808458at2759"/>
<dbReference type="PhylomeDB" id="C4P6S0"/>
<dbReference type="ChiTaRS" id="Nsun4">
    <property type="organism name" value="mouse"/>
</dbReference>
<dbReference type="Proteomes" id="UP000000589">
    <property type="component" value="Chromosome 4"/>
</dbReference>
<dbReference type="RNAct" id="C4P6S0">
    <property type="molecule type" value="protein"/>
</dbReference>
<dbReference type="Bgee" id="ENSMUSG00000028706">
    <property type="expression patterns" value="Expressed in primary oocyte and 272 other cell types or tissues"/>
</dbReference>
<dbReference type="ExpressionAtlas" id="C4P6S0">
    <property type="expression patterns" value="baseline and differential"/>
</dbReference>
<dbReference type="GO" id="GO:0005762">
    <property type="term" value="C:mitochondrial large ribosomal subunit"/>
    <property type="evidence" value="ECO:0000266"/>
    <property type="project" value="MGI"/>
</dbReference>
<dbReference type="GO" id="GO:0005739">
    <property type="term" value="C:mitochondrion"/>
    <property type="evidence" value="ECO:0000314"/>
    <property type="project" value="MGI"/>
</dbReference>
<sequence>MNSSPPFLLKISAPSTSPQADCPNNYSFPPESPSSCRKGFTPVLTLEVPVAPGKDFNDHLSCNAGLSPNAGNRFTNPPYSREPFSCLTISSPCLPRRIPTPPPPPPVLSSPPPPERCPFEPFSPLLGRLYRQEPAGSSSPCFDRFSLQGSPSPHQRNLCCNYIDSPESQRSCPPSPRLCYVTSPPLIHQAPRASPVTSPELTHITLETGPVISTPLMPGSQGNYSIISPLLTHRPLRPGLAISPPLAHRSVETRPLTPASISHRGPHCPSRRSYNDPPLSSASSPPSGNPYHDNPMPPNSCEPKPQLDVPLGKNGCGPPLSSQAGMSGSPISPQEGCIHYSHLCPDSQISAPRSPFCVINLPPESAGSPSSSLPQALQKPCVGSFLWEPGGNSYLLLTPGTIISGPSCTTGPPLPQCPNPSPYFPSPLNNQCVAPPQSPRGYNEPRPPTSAPPQMKSPKSPESRRNPYKCRSLDNTPHHTPPSHSKSHKTNTCPQPPSQSFGLFSPCMEPAITTTSNSCPKEPPPETAVLKTVAPTSCPHSSPCNPALPSRYPKSSPHVPPPVSPCNTHMYSVVPPTSHLSPLSSPLNQSIPLPQPAVLPCGTYSAPRGPPSHIKSVAPPCSTHIYSFIPLRTPFDPRCLPVVPRARFCPTTVPCGIHTYAVTSPVPLNNPSQIPYSCSLPPSKTSSTCSTSVSSTIVCSDYQSSDSQINHQNKSQSPNKNSSLHNQSKSPLRRGAFQSRSRSRSSSPLQSSTQDRNESTNMGVKHHKRSRKQSQSPADGKIESQSKSLQHRKSVGQIKSPHSKKK</sequence>
<organism>
    <name type="scientific">Mus musculus</name>
    <name type="common">Mouse</name>
    <dbReference type="NCBI Taxonomy" id="10090"/>
    <lineage>
        <taxon>Eukaryota</taxon>
        <taxon>Metazoa</taxon>
        <taxon>Chordata</taxon>
        <taxon>Craniata</taxon>
        <taxon>Vertebrata</taxon>
        <taxon>Euteleostomi</taxon>
        <taxon>Mammalia</taxon>
        <taxon>Eutheria</taxon>
        <taxon>Euarchontoglires</taxon>
        <taxon>Glires</taxon>
        <taxon>Rodentia</taxon>
        <taxon>Myomorpha</taxon>
        <taxon>Muroidea</taxon>
        <taxon>Muridae</taxon>
        <taxon>Murinae</taxon>
        <taxon>Mus</taxon>
        <taxon>Mus</taxon>
    </lineage>
</organism>
<name>SHTAP_MOUSE</name>
<reference key="1">
    <citation type="journal article" date="2010" name="Biol. Cell">
        <title>A novel protein, sperm head and tail associated protein (SHTAP), interacts with cysteine-rich secretory protein 2 (CRISP2) during spermatogenesis in the mouse.</title>
        <authorList>
            <person name="Jamsai D."/>
            <person name="Rijal S."/>
            <person name="Bianco D.M."/>
            <person name="O'Connor A.E."/>
            <person name="Merriner D.J."/>
            <person name="Smith S.J."/>
            <person name="Gibbs G.M."/>
            <person name="O'Bryan M.K."/>
        </authorList>
    </citation>
    <scope>NUCLEOTIDE SEQUENCE [MRNA] (ISOFORMS 3 AND 4)</scope>
    <scope>POTENTIAL FUNCTION</scope>
    <scope>INTERACTION WITH CRISP2</scope>
    <scope>SUBCELLULAR LOCATION</scope>
    <scope>TISSUE SPECIFICITY</scope>
    <scope>DEVELOPMENTAL STAGE</scope>
    <source>
        <strain>C57BL/6 X CBA</strain>
    </source>
</reference>
<evidence type="ECO:0000256" key="1">
    <source>
        <dbReference type="SAM" id="MobiDB-lite"/>
    </source>
</evidence>
<evidence type="ECO:0000269" key="2">
    <source>
    </source>
</evidence>
<evidence type="ECO:0000303" key="3">
    <source>
    </source>
</evidence>
<evidence type="ECO:0000305" key="4"/>
<feature type="chain" id="PRO_0000389442" description="Sperm head and tail associated protein">
    <location>
        <begin position="1"/>
        <end position="806"/>
    </location>
</feature>
<feature type="region of interest" description="Disordered" evidence="1">
    <location>
        <begin position="1"/>
        <end position="36"/>
    </location>
</feature>
<feature type="region of interest" description="Disordered" evidence="1">
    <location>
        <begin position="257"/>
        <end position="329"/>
    </location>
</feature>
<feature type="region of interest" description="Disordered" evidence="1">
    <location>
        <begin position="428"/>
        <end position="496"/>
    </location>
</feature>
<feature type="region of interest" description="Interaction with CRISP2" evidence="2">
    <location>
        <begin position="521"/>
        <end position="806"/>
    </location>
</feature>
<feature type="region of interest" description="Disordered" evidence="1">
    <location>
        <begin position="707"/>
        <end position="806"/>
    </location>
</feature>
<feature type="compositionally biased region" description="Polar residues" evidence="1">
    <location>
        <begin position="13"/>
        <end position="27"/>
    </location>
</feature>
<feature type="compositionally biased region" description="Low complexity" evidence="1">
    <location>
        <begin position="277"/>
        <end position="290"/>
    </location>
</feature>
<feature type="compositionally biased region" description="Polar residues" evidence="1">
    <location>
        <begin position="320"/>
        <end position="329"/>
    </location>
</feature>
<feature type="compositionally biased region" description="Low complexity" evidence="1">
    <location>
        <begin position="710"/>
        <end position="723"/>
    </location>
</feature>
<feature type="compositionally biased region" description="Low complexity" evidence="1">
    <location>
        <begin position="733"/>
        <end position="754"/>
    </location>
</feature>
<feature type="compositionally biased region" description="Polar residues" evidence="1">
    <location>
        <begin position="773"/>
        <end position="788"/>
    </location>
</feature>
<feature type="splice variant" id="VSP_038426" description="In isoform 4." evidence="3">
    <location>
        <begin position="1"/>
        <end position="295"/>
    </location>
</feature>
<keyword id="KW-0025">Alternative splicing</keyword>
<keyword id="KW-0963">Cytoplasm</keyword>
<keyword id="KW-1185">Reference proteome</keyword>
<comment type="function">
    <text evidence="4">Plays a role during spermatogenesis.</text>
</comment>
<comment type="subunit">
    <text evidence="2">Interacts with CRISP2.</text>
</comment>
<comment type="subcellular location">
    <subcellularLocation>
        <location evidence="2">Cytoplasm</location>
    </subcellularLocation>
    <text>Localized to the peri-acrosomal region of the round spermatids as well as the heads and tails of the elongated spermatids and spermatozoa. Redistributed within the head during sperm capacitation.</text>
</comment>
<comment type="alternative products">
    <event type="alternative splicing"/>
    <isoform>
        <id>C4P6S0-1</id>
        <name>3</name>
        <sequence type="displayed"/>
    </isoform>
    <isoform>
        <id>C4P6S0-2</id>
        <name>4</name>
        <sequence type="described" ref="VSP_038426"/>
    </isoform>
    <isoform>
        <id>Q9CZ57-1</id>
        <name>1</name>
        <sequence type="external"/>
    </isoform>
    <isoform>
        <id>Q9CZ57-2</id>
        <name>2</name>
        <sequence type="external"/>
    </isoform>
    <text>Additional isoforms seem to exist.</text>
</comment>
<comment type="tissue specificity">
    <text evidence="2">Isoforms 3 and 4 are expressed in testis (at protein level).</text>
</comment>
<comment type="developmental stage">
    <text evidence="2">Isoforms 3 and 4 are first detected in testis from postnatal day 18 to adult.</text>
</comment>
<accession>C4P6S0</accession>
<gene>
    <name type="primary">Nsun4</name>
    <name type="synonym">Shtap</name>
</gene>